<organism>
    <name type="scientific">Mus musculus</name>
    <name type="common">Mouse</name>
    <dbReference type="NCBI Taxonomy" id="10090"/>
    <lineage>
        <taxon>Eukaryota</taxon>
        <taxon>Metazoa</taxon>
        <taxon>Chordata</taxon>
        <taxon>Craniata</taxon>
        <taxon>Vertebrata</taxon>
        <taxon>Euteleostomi</taxon>
        <taxon>Mammalia</taxon>
        <taxon>Eutheria</taxon>
        <taxon>Euarchontoglires</taxon>
        <taxon>Glires</taxon>
        <taxon>Rodentia</taxon>
        <taxon>Myomorpha</taxon>
        <taxon>Muroidea</taxon>
        <taxon>Muridae</taxon>
        <taxon>Murinae</taxon>
        <taxon>Mus</taxon>
        <taxon>Mus</taxon>
    </lineage>
</organism>
<dbReference type="EMBL" id="X05862">
    <property type="protein sequence ID" value="CAA29290.1"/>
    <property type="molecule type" value="Genomic_DNA"/>
</dbReference>
<dbReference type="EMBL" id="U62669">
    <property type="protein sequence ID" value="AAB04762.1"/>
    <property type="molecule type" value="Genomic_DNA"/>
</dbReference>
<dbReference type="EMBL" id="AY158927">
    <property type="protein sequence ID" value="AAO06237.1"/>
    <property type="molecule type" value="Genomic_DNA"/>
</dbReference>
<dbReference type="EMBL" id="AY158929">
    <property type="protein sequence ID" value="AAO06239.1"/>
    <property type="molecule type" value="Genomic_DNA"/>
</dbReference>
<dbReference type="EMBL" id="AY158932">
    <property type="protein sequence ID" value="AAO06242.1"/>
    <property type="molecule type" value="Genomic_DNA"/>
</dbReference>
<dbReference type="EMBL" id="AY158935">
    <property type="protein sequence ID" value="AAO06245.1"/>
    <property type="molecule type" value="Genomic_DNA"/>
</dbReference>
<dbReference type="EMBL" id="AL589651">
    <property type="protein sequence ID" value="CAI24103.1"/>
    <property type="molecule type" value="Genomic_DNA"/>
</dbReference>
<dbReference type="EMBL" id="AL589651">
    <property type="protein sequence ID" value="CAI24111.1"/>
    <property type="molecule type" value="Genomic_DNA"/>
</dbReference>
<dbReference type="EMBL" id="AL589879">
    <property type="protein sequence ID" value="CAI25462.1"/>
    <property type="molecule type" value="Genomic_DNA"/>
</dbReference>
<dbReference type="EMBL" id="AL589879">
    <property type="protein sequence ID" value="CAI25467.1"/>
    <property type="molecule type" value="Genomic_DNA"/>
</dbReference>
<dbReference type="EMBL" id="AL590614">
    <property type="protein sequence ID" value="CAI26130.1"/>
    <property type="molecule type" value="Genomic_DNA"/>
</dbReference>
<dbReference type="CCDS" id="CCDS26287.1"/>
<dbReference type="CCDS" id="CCDS26294.1"/>
<dbReference type="CCDS" id="CCDS26308.1"/>
<dbReference type="CCDS" id="CCDS26350.1"/>
<dbReference type="PIR" id="S04151">
    <property type="entry name" value="S04151"/>
</dbReference>
<dbReference type="RefSeq" id="NP_835502.1">
    <property type="nucleotide sequence ID" value="NM_178195.3"/>
</dbReference>
<dbReference type="RefSeq" id="NP_835505.1">
    <property type="nucleotide sequence ID" value="NM_178198.2"/>
</dbReference>
<dbReference type="RefSeq" id="NP_835506.1">
    <property type="nucleotide sequence ID" value="NM_178199.2"/>
</dbReference>
<dbReference type="RefSeq" id="NP_835508.1">
    <property type="nucleotide sequence ID" value="NM_178201.2"/>
</dbReference>
<dbReference type="SMR" id="P10853"/>
<dbReference type="BioGRID" id="235099">
    <property type="interactions" value="4"/>
</dbReference>
<dbReference type="BioGRID" id="235102">
    <property type="interactions" value="2"/>
</dbReference>
<dbReference type="BioGRID" id="235104">
    <property type="interactions" value="3"/>
</dbReference>
<dbReference type="BioGRID" id="235106">
    <property type="interactions" value="3"/>
</dbReference>
<dbReference type="ComplexPortal" id="CPX-5705">
    <property type="entry name" value="CENP-A nucleosome complex"/>
</dbReference>
<dbReference type="ComplexPortal" id="CPX-5712">
    <property type="entry name" value="Nucleosome, variant H3.1-H2A.2-H2B.1"/>
</dbReference>
<dbReference type="ComplexPortal" id="CPX-5713">
    <property type="entry name" value="Nucleosome, variant H3.2-H2A.2-H2B.1"/>
</dbReference>
<dbReference type="ComplexPortal" id="CPX-5714">
    <property type="entry name" value="Nucleosome, variant H3.g-H2A.2-H2B.1"/>
</dbReference>
<dbReference type="ComplexPortal" id="CPX-5715">
    <property type="entry name" value="Nucleosome, variant H3.1-H2A.Z-H2B.1"/>
</dbReference>
<dbReference type="ComplexPortal" id="CPX-5716">
    <property type="entry name" value="Nucleosome, variant H3.1-H2A.V-H2B.1"/>
</dbReference>
<dbReference type="FunCoup" id="P10853">
    <property type="interactions" value="1189"/>
</dbReference>
<dbReference type="MINT" id="P10853"/>
<dbReference type="STRING" id="10090.ENSMUSP00000089301"/>
<dbReference type="GlyCosmos" id="P10853">
    <property type="glycosylation" value="1 site, No reported glycans"/>
</dbReference>
<dbReference type="GlyGen" id="P10853">
    <property type="glycosylation" value="1 site, 1 O-linked glycan (1 site)"/>
</dbReference>
<dbReference type="iPTMnet" id="P10853"/>
<dbReference type="PhosphoSitePlus" id="P10853"/>
<dbReference type="SwissPalm" id="P10853"/>
<dbReference type="jPOST" id="P10853"/>
<dbReference type="PaxDb" id="10090-ENSMUSP00000089301"/>
<dbReference type="PeptideAtlas" id="P10853"/>
<dbReference type="Pumba" id="P10853"/>
<dbReference type="TopDownProteomics" id="P10853"/>
<dbReference type="DNASU" id="319180"/>
<dbReference type="Ensembl" id="ENSMUST00000091709.3">
    <property type="protein sequence ID" value="ENSMUSP00000089301.3"/>
    <property type="gene ID" value="ENSMUSG00000095217.2"/>
</dbReference>
<dbReference type="Ensembl" id="ENSMUST00000091756.2">
    <property type="protein sequence ID" value="ENSMUSP00000089350.2"/>
    <property type="gene ID" value="ENSMUSG00000094338.2"/>
</dbReference>
<dbReference type="Ensembl" id="ENSMUST00000105106.2">
    <property type="protein sequence ID" value="ENSMUSP00000100738.2"/>
    <property type="gene ID" value="ENSMUSG00000069268.5"/>
</dbReference>
<dbReference type="Ensembl" id="ENSMUST00000110452.2">
    <property type="protein sequence ID" value="ENSMUSP00000106082.2"/>
    <property type="gene ID" value="ENSMUSG00000069300.4"/>
</dbReference>
<dbReference type="Ensembl" id="ENSMUST00000110467.2">
    <property type="protein sequence ID" value="ENSMUSP00000106093.2"/>
    <property type="gene ID" value="ENSMUSG00000069303.8"/>
</dbReference>
<dbReference type="Ensembl" id="ENSMUST00000110469.2">
    <property type="protein sequence ID" value="ENSMUSP00000106095.2"/>
    <property type="gene ID" value="ENSMUSG00000069307.8"/>
</dbReference>
<dbReference type="GeneID" id="319180"/>
<dbReference type="GeneID" id="319183"/>
<dbReference type="GeneID" id="319185"/>
<dbReference type="GeneID" id="319187"/>
<dbReference type="KEGG" id="mmu:319180"/>
<dbReference type="KEGG" id="mmu:319183"/>
<dbReference type="KEGG" id="mmu:319185"/>
<dbReference type="KEGG" id="mmu:319187"/>
<dbReference type="KEGG" id="mmu:665596"/>
<dbReference type="KEGG" id="mmu:665622"/>
<dbReference type="UCSC" id="uc007pra.2">
    <property type="organism name" value="mouse"/>
</dbReference>
<dbReference type="CTD" id="665596"/>
<dbReference type="CTD" id="665622"/>
<dbReference type="CTD" id="8340"/>
<dbReference type="CTD" id="8341"/>
<dbReference type="CTD" id="8343"/>
<dbReference type="CTD" id="8970"/>
<dbReference type="MGI" id="MGI:2448388">
    <property type="gene designation" value="H2bc11"/>
</dbReference>
<dbReference type="MGI" id="MGI:2448403">
    <property type="gene designation" value="H2bc13"/>
</dbReference>
<dbReference type="MGI" id="MGI:2448407">
    <property type="gene designation" value="H2bc15"/>
</dbReference>
<dbReference type="MGI" id="MGI:2448383">
    <property type="gene designation" value="H2bc7"/>
</dbReference>
<dbReference type="VEuPathDB" id="HostDB:ENSMUSG00000069268"/>
<dbReference type="VEuPathDB" id="HostDB:ENSMUSG00000069300"/>
<dbReference type="VEuPathDB" id="HostDB:ENSMUSG00000069303"/>
<dbReference type="VEuPathDB" id="HostDB:ENSMUSG00000069307"/>
<dbReference type="VEuPathDB" id="HostDB:ENSMUSG00000094338"/>
<dbReference type="VEuPathDB" id="HostDB:ENSMUSG00000095217"/>
<dbReference type="eggNOG" id="KOG1744">
    <property type="taxonomic scope" value="Eukaryota"/>
</dbReference>
<dbReference type="GeneTree" id="ENSGT01110000267152"/>
<dbReference type="HOGENOM" id="CLU_075666_2_1_1"/>
<dbReference type="InParanoid" id="P10853"/>
<dbReference type="OMA" id="RTISRWM"/>
<dbReference type="OrthoDB" id="9620091at2759"/>
<dbReference type="PhylomeDB" id="P10853"/>
<dbReference type="TreeFam" id="TF300212"/>
<dbReference type="Reactome" id="R-MMU-110330">
    <property type="pathway name" value="Recognition and association of DNA glycosylase with site containing an affected purine"/>
</dbReference>
<dbReference type="Reactome" id="R-MMU-110331">
    <property type="pathway name" value="Cleavage of the damaged purine"/>
</dbReference>
<dbReference type="Reactome" id="R-MMU-212300">
    <property type="pathway name" value="PRC2 methylates histones and DNA"/>
</dbReference>
<dbReference type="Reactome" id="R-MMU-2299718">
    <property type="pathway name" value="Condensation of Prophase Chromosomes"/>
</dbReference>
<dbReference type="Reactome" id="R-MMU-2559586">
    <property type="pathway name" value="DNA Damage/Telomere Stress Induced Senescence"/>
</dbReference>
<dbReference type="Reactome" id="R-MMU-3214815">
    <property type="pathway name" value="HDACs deacetylate histones"/>
</dbReference>
<dbReference type="Reactome" id="R-MMU-3214847">
    <property type="pathway name" value="HATs acetylate histones"/>
</dbReference>
<dbReference type="Reactome" id="R-MMU-5693565">
    <property type="pathway name" value="Recruitment and ATM-mediated phosphorylation of repair and signaling proteins at DNA double strand breaks"/>
</dbReference>
<dbReference type="Reactome" id="R-MMU-5693571">
    <property type="pathway name" value="Nonhomologous End-Joining (NHEJ)"/>
</dbReference>
<dbReference type="Reactome" id="R-MMU-5693607">
    <property type="pathway name" value="Processing of DNA double-strand break ends"/>
</dbReference>
<dbReference type="Reactome" id="R-MMU-606279">
    <property type="pathway name" value="Deposition of new CENPA-containing nucleosomes at the centromere"/>
</dbReference>
<dbReference type="Reactome" id="R-MMU-69473">
    <property type="pathway name" value="G2/M DNA damage checkpoint"/>
</dbReference>
<dbReference type="Reactome" id="R-MMU-8866654">
    <property type="pathway name" value="E3 ubiquitin ligases ubiquitinate target proteins"/>
</dbReference>
<dbReference type="Reactome" id="R-MMU-8936459">
    <property type="pathway name" value="RUNX1 regulates genes involved in megakaryocyte differentiation and platelet function"/>
</dbReference>
<dbReference type="Reactome" id="R-MMU-9018519">
    <property type="pathway name" value="Estrogen-dependent gene expression"/>
</dbReference>
<dbReference type="Reactome" id="R-MMU-9670095">
    <property type="pathway name" value="Inhibition of DNA recombination at telomere"/>
</dbReference>
<dbReference type="Reactome" id="R-MMU-9841922">
    <property type="pathway name" value="MLL4 and MLL3 complexes regulate expression of PPARG target genes in adipogenesis and hepatic steatosis"/>
</dbReference>
<dbReference type="Reactome" id="R-MMU-9843940">
    <property type="pathway name" value="Regulation of endogenous retroelements by KRAB-ZFP proteins"/>
</dbReference>
<dbReference type="BioGRID-ORCS" id="319180">
    <property type="hits" value="12 hits in 42 CRISPR screens"/>
</dbReference>
<dbReference type="BioGRID-ORCS" id="319183">
    <property type="hits" value="11 hits in 45 CRISPR screens"/>
</dbReference>
<dbReference type="BioGRID-ORCS" id="319185">
    <property type="hits" value="12 hits in 43 CRISPR screens"/>
</dbReference>
<dbReference type="BioGRID-ORCS" id="319187">
    <property type="hits" value="14 hits in 43 CRISPR screens"/>
</dbReference>
<dbReference type="BioGRID-ORCS" id="665596">
    <property type="hits" value="3 hits in 19 CRISPR screens"/>
</dbReference>
<dbReference type="BioGRID-ORCS" id="665622">
    <property type="hits" value="5 hits in 19 CRISPR screens"/>
</dbReference>
<dbReference type="PRO" id="PR:P10853"/>
<dbReference type="Proteomes" id="UP000000589">
    <property type="component" value="Chromosome 13"/>
</dbReference>
<dbReference type="RNAct" id="P10853">
    <property type="molecule type" value="protein"/>
</dbReference>
<dbReference type="Bgee" id="ENSMUSG00000069268">
    <property type="expression patterns" value="Expressed in uterus and 54 other cell types or tissues"/>
</dbReference>
<dbReference type="ExpressionAtlas" id="P10853">
    <property type="expression patterns" value="baseline"/>
</dbReference>
<dbReference type="GO" id="GO:0043505">
    <property type="term" value="C:CENP-A containing nucleosome"/>
    <property type="evidence" value="ECO:0000266"/>
    <property type="project" value="ComplexPortal"/>
</dbReference>
<dbReference type="GO" id="GO:0005654">
    <property type="term" value="C:nucleoplasm"/>
    <property type="evidence" value="ECO:0000304"/>
    <property type="project" value="Reactome"/>
</dbReference>
<dbReference type="GO" id="GO:0000786">
    <property type="term" value="C:nucleosome"/>
    <property type="evidence" value="ECO:0000266"/>
    <property type="project" value="ComplexPortal"/>
</dbReference>
<dbReference type="GO" id="GO:0003677">
    <property type="term" value="F:DNA binding"/>
    <property type="evidence" value="ECO:0007669"/>
    <property type="project" value="UniProtKB-KW"/>
</dbReference>
<dbReference type="GO" id="GO:0046982">
    <property type="term" value="F:protein heterodimerization activity"/>
    <property type="evidence" value="ECO:0007669"/>
    <property type="project" value="InterPro"/>
</dbReference>
<dbReference type="GO" id="GO:0030527">
    <property type="term" value="F:structural constituent of chromatin"/>
    <property type="evidence" value="ECO:0007669"/>
    <property type="project" value="InterPro"/>
</dbReference>
<dbReference type="GO" id="GO:0006325">
    <property type="term" value="P:chromatin organization"/>
    <property type="evidence" value="ECO:0000303"/>
    <property type="project" value="ComplexPortal"/>
</dbReference>
<dbReference type="GO" id="GO:0061644">
    <property type="term" value="P:protein localization to CENP-A containing chromatin"/>
    <property type="evidence" value="ECO:0000303"/>
    <property type="project" value="ComplexPortal"/>
</dbReference>
<dbReference type="CDD" id="cd22910">
    <property type="entry name" value="HFD_H2B"/>
    <property type="match status" value="1"/>
</dbReference>
<dbReference type="FunFam" id="1.10.20.10:FF:000003">
    <property type="entry name" value="Histone H2B"/>
    <property type="match status" value="1"/>
</dbReference>
<dbReference type="Gene3D" id="1.10.20.10">
    <property type="entry name" value="Histone, subunit A"/>
    <property type="match status" value="1"/>
</dbReference>
<dbReference type="InterPro" id="IPR009072">
    <property type="entry name" value="Histone-fold"/>
</dbReference>
<dbReference type="InterPro" id="IPR007125">
    <property type="entry name" value="Histone_H2A/H2B/H3"/>
</dbReference>
<dbReference type="InterPro" id="IPR000558">
    <property type="entry name" value="Histone_H2B"/>
</dbReference>
<dbReference type="InterPro" id="IPR055333">
    <property type="entry name" value="HISTONE_H2B_site"/>
</dbReference>
<dbReference type="PANTHER" id="PTHR23428">
    <property type="entry name" value="HISTONE H2B"/>
    <property type="match status" value="1"/>
</dbReference>
<dbReference type="Pfam" id="PF00125">
    <property type="entry name" value="Histone"/>
    <property type="match status" value="1"/>
</dbReference>
<dbReference type="PRINTS" id="PR00621">
    <property type="entry name" value="HISTONEH2B"/>
</dbReference>
<dbReference type="SMART" id="SM00427">
    <property type="entry name" value="H2B"/>
    <property type="match status" value="1"/>
</dbReference>
<dbReference type="SUPFAM" id="SSF47113">
    <property type="entry name" value="Histone-fold"/>
    <property type="match status" value="1"/>
</dbReference>
<dbReference type="PROSITE" id="PS00357">
    <property type="entry name" value="HISTONE_H2B"/>
    <property type="match status" value="1"/>
</dbReference>
<feature type="initiator methionine" description="Removed" evidence="1">
    <location>
        <position position="1"/>
    </location>
</feature>
<feature type="chain" id="PRO_0000071839" description="Histone H2B type 1-F/J/L">
    <location>
        <begin position="2"/>
        <end position="126"/>
    </location>
</feature>
<feature type="region of interest" description="Disordered" evidence="9">
    <location>
        <begin position="1"/>
        <end position="36"/>
    </location>
</feature>
<feature type="compositionally biased region" description="Low complexity" evidence="9">
    <location>
        <begin position="1"/>
        <end position="12"/>
    </location>
</feature>
<feature type="modified residue" description="N-acetylproline" evidence="1">
    <location>
        <position position="2"/>
    </location>
</feature>
<feature type="modified residue" description="ADP-ribosyl glutamic acid" evidence="2">
    <location>
        <position position="3"/>
    </location>
</feature>
<feature type="modified residue" description="N6-(2-hydroxyisobutyryl)lysine; alternate" evidence="15">
    <location>
        <position position="6"/>
    </location>
</feature>
<feature type="modified residue" description="N6-(beta-hydroxybutyryl)lysine; alternate" evidence="16">
    <location>
        <position position="6"/>
    </location>
</feature>
<feature type="modified residue" description="N6-acetyllysine; alternate" evidence="2">
    <location>
        <position position="6"/>
    </location>
</feature>
<feature type="modified residue" description="N6-butyryllysine; alternate" evidence="2">
    <location>
        <position position="6"/>
    </location>
</feature>
<feature type="modified residue" description="N6-crotonyllysine; alternate" evidence="13">
    <location>
        <position position="6"/>
    </location>
</feature>
<feature type="modified residue" description="N6-lactoyllysine; alternate" evidence="17">
    <location>
        <position position="6"/>
    </location>
</feature>
<feature type="modified residue" description="ADP-ribosylserine" evidence="2">
    <location>
        <position position="7"/>
    </location>
</feature>
<feature type="modified residue" description="N6-(beta-hydroxybutyryl)lysine; alternate" evidence="16">
    <location>
        <position position="12"/>
    </location>
</feature>
<feature type="modified residue" description="N6-acetyllysine; alternate" evidence="4">
    <location>
        <position position="12"/>
    </location>
</feature>
<feature type="modified residue" description="N6-crotonyllysine; alternate" evidence="13">
    <location>
        <position position="12"/>
    </location>
</feature>
<feature type="modified residue" description="N6-lactoyllysine; alternate" evidence="17">
    <location>
        <position position="12"/>
    </location>
</feature>
<feature type="modified residue" description="N6-(2-hydroxyisobutyryl)lysine; alternate" evidence="15">
    <location>
        <position position="13"/>
    </location>
</feature>
<feature type="modified residue" description="N6-acetyllysine; alternate" evidence="2">
    <location>
        <position position="13"/>
    </location>
</feature>
<feature type="modified residue" description="N6-crotonyllysine; alternate" evidence="13">
    <location>
        <position position="13"/>
    </location>
</feature>
<feature type="modified residue" description="Phosphoserine; by STK4/MST1" evidence="10 11">
    <location>
        <position position="15"/>
    </location>
</feature>
<feature type="modified residue" description="N6-acetyllysine; alternate" evidence="2">
    <location>
        <position position="16"/>
    </location>
</feature>
<feature type="modified residue" description="N6-crotonyllysine; alternate" evidence="13">
    <location>
        <position position="16"/>
    </location>
</feature>
<feature type="modified residue" description="N6-lactoyllysine; alternate" evidence="17">
    <location>
        <position position="16"/>
    </location>
</feature>
<feature type="modified residue" description="N6-acetyllysine; alternate" evidence="2">
    <location>
        <position position="17"/>
    </location>
</feature>
<feature type="modified residue" description="N6-crotonyllysine; alternate" evidence="13">
    <location>
        <position position="17"/>
    </location>
</feature>
<feature type="modified residue" description="N6-glutaryllysine; alternate" evidence="2">
    <location>
        <position position="17"/>
    </location>
</feature>
<feature type="modified residue" description="N6-lactoyllysine; alternate" evidence="17">
    <location>
        <position position="17"/>
    </location>
</feature>
<feature type="modified residue" description="N6-(2-hydroxyisobutyryl)lysine; alternate" evidence="15">
    <location>
        <position position="21"/>
    </location>
</feature>
<feature type="modified residue" description="N6-(beta-hydroxybutyryl)lysine; alternate" evidence="16">
    <location>
        <position position="21"/>
    </location>
</feature>
<feature type="modified residue" description="N6-acetyllysine; alternate" evidence="2">
    <location>
        <position position="21"/>
    </location>
</feature>
<feature type="modified residue" description="N6-butyryllysine; alternate" evidence="2">
    <location>
        <position position="21"/>
    </location>
</feature>
<feature type="modified residue" description="N6-crotonyllysine; alternate" evidence="13">
    <location>
        <position position="21"/>
    </location>
</feature>
<feature type="modified residue" description="N6-lactoyllysine; alternate" evidence="17">
    <location>
        <position position="21"/>
    </location>
</feature>
<feature type="modified residue" description="N6-(2-hydroxyisobutyryl)lysine; alternate" evidence="15">
    <location>
        <position position="24"/>
    </location>
</feature>
<feature type="modified residue" description="N6-acetyllysine; alternate" evidence="2">
    <location>
        <position position="24"/>
    </location>
</feature>
<feature type="modified residue" description="N6-crotonyllysine; alternate" evidence="13">
    <location>
        <position position="24"/>
    </location>
</feature>
<feature type="modified residue" description="N6-lactoyllysine; alternate" evidence="2">
    <location>
        <position position="24"/>
    </location>
</feature>
<feature type="modified residue" description="N6-(2-hydroxyisobutyryl)lysine" evidence="15">
    <location>
        <position position="25"/>
    </location>
</feature>
<feature type="modified residue" description="N6-(2-hydroxyisobutyryl)lysine; alternate" evidence="15">
    <location>
        <position position="35"/>
    </location>
</feature>
<feature type="modified residue" description="N6-(beta-hydroxybutyryl)lysine; alternate" evidence="16">
    <location>
        <position position="35"/>
    </location>
</feature>
<feature type="modified residue" description="N6-crotonyllysine; alternate" evidence="13">
    <location>
        <position position="35"/>
    </location>
</feature>
<feature type="modified residue" description="N6-glutaryllysine; alternate" evidence="2">
    <location>
        <position position="35"/>
    </location>
</feature>
<feature type="modified residue" description="N6-succinyllysine; alternate" evidence="2">
    <location>
        <position position="35"/>
    </location>
</feature>
<feature type="modified residue" description="PolyADP-ribosyl glutamic acid" evidence="18">
    <location>
        <position position="36"/>
    </location>
</feature>
<feature type="modified residue" description="Phosphoserine; by AMPK" evidence="12 18">
    <location>
        <position position="37"/>
    </location>
</feature>
<feature type="modified residue" description="N6-(2-hydroxyisobutyryl)lysine; alternate" evidence="15">
    <location>
        <position position="44"/>
    </location>
</feature>
<feature type="modified residue" description="N6-glutaryllysine; alternate" evidence="2">
    <location>
        <position position="44"/>
    </location>
</feature>
<feature type="modified residue" description="N6-lactoyllysine; alternate" evidence="2">
    <location>
        <position position="44"/>
    </location>
</feature>
<feature type="modified residue" description="N6-(2-hydroxyisobutyryl)lysine; alternate" evidence="15">
    <location>
        <position position="47"/>
    </location>
</feature>
<feature type="modified residue" description="N6-glutaryllysine; alternate" evidence="2">
    <location>
        <position position="47"/>
    </location>
</feature>
<feature type="modified residue" description="N6-methyllysine; alternate" evidence="4">
    <location>
        <position position="47"/>
    </location>
</feature>
<feature type="modified residue" description="N6,N6-dimethyllysine; alternate" evidence="4">
    <location>
        <position position="58"/>
    </location>
</feature>
<feature type="modified residue" description="N6-(2-hydroxyisobutyryl)lysine; alternate" evidence="15">
    <location>
        <position position="58"/>
    </location>
</feature>
<feature type="modified residue" description="Dimethylated arginine" evidence="8">
    <location>
        <position position="80"/>
    </location>
</feature>
<feature type="modified residue" description="N6,N6,N6-trimethyllysine; alternate" evidence="8">
    <location>
        <position position="86"/>
    </location>
</feature>
<feature type="modified residue" description="N6-(2-hydroxyisobutyryl)lysine; alternate" evidence="15">
    <location>
        <position position="86"/>
    </location>
</feature>
<feature type="modified residue" description="N6-acetyllysine; alternate" evidence="8">
    <location>
        <position position="86"/>
    </location>
</feature>
<feature type="modified residue" description="N6-lactoyllysine; alternate" evidence="17">
    <location>
        <position position="86"/>
    </location>
</feature>
<feature type="modified residue" description="Omega-N-methylarginine" evidence="8">
    <location>
        <position position="87"/>
    </location>
</feature>
<feature type="modified residue" description="Omega-N-methylarginine" evidence="8">
    <location>
        <position position="93"/>
    </location>
</feature>
<feature type="modified residue" description="N6-(2-hydroxyisobutyryl)lysine; alternate" evidence="15">
    <location>
        <position position="109"/>
    </location>
</feature>
<feature type="modified residue" description="N6-(beta-hydroxybutyryl)lysine; alternate" evidence="16">
    <location>
        <position position="109"/>
    </location>
</feature>
<feature type="modified residue" description="N6-glutaryllysine; alternate" evidence="2">
    <location>
        <position position="109"/>
    </location>
</feature>
<feature type="modified residue" description="N6-lactoyllysine; alternate" evidence="17">
    <location>
        <position position="109"/>
    </location>
</feature>
<feature type="modified residue" description="N6-methyllysine; alternate" evidence="4">
    <location>
        <position position="109"/>
    </location>
</feature>
<feature type="modified residue" description="Phosphothreonine" evidence="6">
    <location>
        <position position="116"/>
    </location>
</feature>
<feature type="modified residue" description="N6-(2-hydroxyisobutyryl)lysine; alternate" evidence="15">
    <location>
        <position position="117"/>
    </location>
</feature>
<feature type="modified residue" description="N6-(beta-hydroxybutyryl)lysine; alternate" evidence="16">
    <location>
        <position position="117"/>
    </location>
</feature>
<feature type="modified residue" description="N6-glutaryllysine; alternate" evidence="2">
    <location>
        <position position="117"/>
    </location>
</feature>
<feature type="modified residue" description="N6-lactoyllysine; alternate" evidence="17">
    <location>
        <position position="117"/>
    </location>
</feature>
<feature type="modified residue" description="N6-methylated lysine; alternate" evidence="6">
    <location>
        <position position="117"/>
    </location>
</feature>
<feature type="modified residue" description="N6-succinyllysine; alternate" evidence="2">
    <location>
        <position position="117"/>
    </location>
</feature>
<feature type="modified residue" description="N6-(2-hydroxyisobutyryl)lysine; alternate" evidence="15">
    <location>
        <position position="121"/>
    </location>
</feature>
<feature type="modified residue" description="N6-glutaryllysine; alternate" evidence="2">
    <location>
        <position position="121"/>
    </location>
</feature>
<feature type="modified residue" description="N6-lactoyllysine; alternate" evidence="2">
    <location>
        <position position="121"/>
    </location>
</feature>
<feature type="modified residue" description="N6-succinyllysine; alternate" evidence="14">
    <location>
        <position position="121"/>
    </location>
</feature>
<feature type="glycosylation site" description="O-linked (GlcNAc) serine" evidence="4">
    <location>
        <position position="113"/>
    </location>
</feature>
<feature type="cross-link" description="Glycyl lysine isopeptide (Lys-Gly) (interchain with G-Cter in SUMO2); alternate" evidence="3">
    <location>
        <position position="6"/>
    </location>
</feature>
<feature type="cross-link" description="Glycyl lysine isopeptide (Lys-Gly) (interchain with G-Cter in SUMO2); alternate" evidence="7">
    <location>
        <position position="21"/>
    </location>
</feature>
<feature type="cross-link" description="Glycyl lysine isopeptide (Lys-Gly) (interchain with G-Cter in ubiquitin); alternate" evidence="2">
    <location>
        <position position="35"/>
    </location>
</feature>
<feature type="cross-link" description="Glycyl lysine isopeptide (Lys-Gly) (interchain with G-Cter in ubiquitin); alternate" evidence="5">
    <location>
        <position position="121"/>
    </location>
</feature>
<evidence type="ECO:0000250" key="1">
    <source>
        <dbReference type="UniProtKB" id="P23527"/>
    </source>
</evidence>
<evidence type="ECO:0000250" key="2">
    <source>
        <dbReference type="UniProtKB" id="P33778"/>
    </source>
</evidence>
<evidence type="ECO:0000250" key="3">
    <source>
        <dbReference type="UniProtKB" id="P58876"/>
    </source>
</evidence>
<evidence type="ECO:0000250" key="4">
    <source>
        <dbReference type="UniProtKB" id="P62807"/>
    </source>
</evidence>
<evidence type="ECO:0000250" key="5">
    <source>
        <dbReference type="UniProtKB" id="P62808"/>
    </source>
</evidence>
<evidence type="ECO:0000250" key="6">
    <source>
        <dbReference type="UniProtKB" id="Q00729"/>
    </source>
</evidence>
<evidence type="ECO:0000250" key="7">
    <source>
        <dbReference type="UniProtKB" id="Q5QNW6"/>
    </source>
</evidence>
<evidence type="ECO:0000250" key="8">
    <source>
        <dbReference type="UniProtKB" id="Q96A08"/>
    </source>
</evidence>
<evidence type="ECO:0000256" key="9">
    <source>
        <dbReference type="SAM" id="MobiDB-lite"/>
    </source>
</evidence>
<evidence type="ECO:0000269" key="10">
    <source>
    </source>
</evidence>
<evidence type="ECO:0000269" key="11">
    <source>
    </source>
</evidence>
<evidence type="ECO:0000269" key="12">
    <source>
    </source>
</evidence>
<evidence type="ECO:0000269" key="13">
    <source>
    </source>
</evidence>
<evidence type="ECO:0000269" key="14">
    <source>
    </source>
</evidence>
<evidence type="ECO:0000269" key="15">
    <source>
    </source>
</evidence>
<evidence type="ECO:0000269" key="16">
    <source>
    </source>
</evidence>
<evidence type="ECO:0000269" key="17">
    <source>
    </source>
</evidence>
<evidence type="ECO:0000269" key="18">
    <source>
    </source>
</evidence>
<evidence type="ECO:0000305" key="19"/>
<evidence type="ECO:0000312" key="20">
    <source>
        <dbReference type="MGI" id="MGI:2448383"/>
    </source>
</evidence>
<evidence type="ECO:0000312" key="21">
    <source>
        <dbReference type="MGI" id="MGI:2448388"/>
    </source>
</evidence>
<evidence type="ECO:0000312" key="22">
    <source>
        <dbReference type="MGI" id="MGI:2448403"/>
    </source>
</evidence>
<evidence type="ECO:0000312" key="23">
    <source>
        <dbReference type="MGI" id="MGI:2448407"/>
    </source>
</evidence>
<name>H2B1F_MOUSE</name>
<gene>
    <name evidence="20" type="primary">H2bc7</name>
    <name type="synonym">H2b-f</name>
    <name evidence="20" type="synonym">Hist1h2bf</name>
</gene>
<gene>
    <name evidence="21" type="primary">H2bc11</name>
    <name type="synonym">H2b-j</name>
    <name evidence="21" type="synonym">Hist1h2bj</name>
</gene>
<gene>
    <name evidence="22" type="primary">H2bc13</name>
    <name type="synonym">H2b-l</name>
    <name evidence="22" type="synonym">Hist1h2bl</name>
</gene>
<gene>
    <name evidence="23" type="primary">H2bc15</name>
    <name type="synonym">H2b-n</name>
    <name evidence="23" type="synonym">Hist1h2bn</name>
</gene>
<accession>P10853</accession>
<accession>Q5SZZ3</accession>
<proteinExistence type="evidence at protein level"/>
<protein>
    <recommendedName>
        <fullName>Histone H2B type 1-F/J/L</fullName>
    </recommendedName>
    <alternativeName>
        <fullName>H2B 291A</fullName>
    </alternativeName>
</protein>
<keyword id="KW-0007">Acetylation</keyword>
<keyword id="KW-0013">ADP-ribosylation</keyword>
<keyword id="KW-0158">Chromosome</keyword>
<keyword id="KW-0238">DNA-binding</keyword>
<keyword id="KW-0325">Glycoprotein</keyword>
<keyword id="KW-0379">Hydroxylation</keyword>
<keyword id="KW-1017">Isopeptide bond</keyword>
<keyword id="KW-0488">Methylation</keyword>
<keyword id="KW-0544">Nucleosome core</keyword>
<keyword id="KW-0539">Nucleus</keyword>
<keyword id="KW-0597">Phosphoprotein</keyword>
<keyword id="KW-1185">Reference proteome</keyword>
<keyword id="KW-0832">Ubl conjugation</keyword>
<sequence length="126" mass="13936">MPEPAKSAPAPKKGSKKAVTKAQKKDGKKRKRSRKESYSVYVYKVLKQVHPDTGISSKAMGIMNSFVNDIFERIASEASRLAHYNKRSTITSREIQTAVRLLLPGELAKHAVSEGTKAVTKYTSSK</sequence>
<comment type="function">
    <text>Core component of nucleosome. Nucleosomes wrap and compact DNA into chromatin, limiting DNA accessibility to the cellular machineries which require DNA as a template. Histones thereby play a central role in transcription regulation, DNA repair, DNA replication and chromosomal stability. DNA accessibility is regulated via a complex set of post-translational modifications of histones, also called histone code, and nucleosome remodeling.</text>
</comment>
<comment type="subunit">
    <text>The nucleosome is a histone octamer containing two molecules each of H2A, H2B, H3 and H4 assembled in one H3-H4 heterotetramer and two H2A-H2B heterodimers. The octamer wraps approximately 147 bp of DNA.</text>
</comment>
<comment type="subcellular location">
    <subcellularLocation>
        <location>Nucleus</location>
    </subcellularLocation>
    <subcellularLocation>
        <location>Chromosome</location>
    </subcellularLocation>
</comment>
<comment type="PTM">
    <text evidence="2">Monoubiquitination at Lys-35 (H2BK34Ub) by the MSL1/MSL2 dimer is required for histone H3 'Lys-4' (H3K4me) and 'Lys-79' (H3K79me) methylation and transcription activation at specific gene loci, such as HOXA9 and MEIS1 loci. Similarly, monoubiquitination at Lys-121 (H2BK120Ub) by the RNF20/40 complex gives a specific tag for epigenetic transcriptional activation and is also prerequisite for histone H3 'Lys-4' and 'Lys-79' methylation. It also functions cooperatively with the FACT dimer to stimulate elongation by RNA polymerase II. H2BK120Ub also acts as a regulator of mRNA splicing: deubiquitination by USP49 is required for efficient cotranscriptional splicing of a large set of exons (By similarity).</text>
</comment>
<comment type="PTM">
    <text evidence="10 11 12 18">Phosphorylated on Ser-15 (H2BS14ph) by STK4/MST1 during apoptosis; which facilitates apoptotic chromatin condensation (PubMed:15197225, PubMed:16039583). Also phosphorylated on Ser-15 in response to DNA double strand breaks (DSBs), and in correlation with somatic hypermutation and immunoglobulin class-switch recombination (PubMed:15197225). Phosphorylation at Ser-37 (H2BS36ph) by AMPK in response to stress promotes transcription (PubMed:20647423, PubMed:32822587).</text>
</comment>
<comment type="PTM">
    <text evidence="4">GlcNAcylation at Ser-113 promotes monoubiquitination of Lys-121. It fluctuates in response to extracellular glucose, and associates with transcribed genes (By similarity).</text>
</comment>
<comment type="PTM">
    <text evidence="2 18">ADP-ribosylated by PARP1 or PARP2 on Ser-7 (H2BS6ADPr) in response to DNA damage (By similarity). H2BS6ADPr promotes recruitment of CHD1L (By similarity). Mono-ADP-ribosylated on Glu-3 (H2BE2ADPr) by PARP3 in response to single-strand breaks (By similarity). Poly ADP-ribosylation on Glu-36 (H2BE35ADPr) by PARP1 regulates adipogenesis: it inhibits phosphorylation at Ser-37 (H2BS36ph), thereby blocking expression of pro-adipogenetic genes (PubMed:32822587).</text>
</comment>
<comment type="PTM">
    <text evidence="13">Crotonylation (Kcr) is specifically present in male germ cells and marks testis-specific genes in post-meiotic cells, including X-linked genes that escape sex chromosome inactivation in haploid cells. Crotonylation marks active promoters and enhancers and confers resistance to transcriptional repressors. It is also associated with post-meiotically activated genes on autosomes.</text>
</comment>
<comment type="PTM">
    <text evidence="16">Hydroxybutyrylation of histones is induced by starvation.</text>
</comment>
<comment type="PTM">
    <text evidence="2">Lactylated in macrophages by EP300/P300 by using lactoyl-CoA directly derived from endogenous or exogenous lactate, leading to stimulates gene transcription.</text>
</comment>
<comment type="similarity">
    <text evidence="19">Belongs to the histone H2B family.</text>
</comment>
<reference key="1">
    <citation type="journal article" date="1987" name="Nucleic Acids Res.">
        <title>Mouse histone H2A and H2B genes: four functional genes and a pseudogene undergoing gene conversion with a closely linked functional gene.</title>
        <authorList>
            <person name="Liu T.-J."/>
            <person name="Liu L."/>
            <person name="Marzluff W.F."/>
        </authorList>
    </citation>
    <scope>NUCLEOTIDE SEQUENCE [GENOMIC DNA]</scope>
</reference>
<reference key="2">
    <citation type="journal article" date="1996" name="Genome Res.">
        <title>Characterization of the mouse histone gene cluster on chromosome 13: 45 histone genes in three patches spread over 1Mb.</title>
        <authorList>
            <person name="Wang Z.-F."/>
            <person name="Krasikov T."/>
            <person name="Frey M.R."/>
            <person name="Wang J."/>
            <person name="Matera A.G."/>
            <person name="Marzluff W.F."/>
        </authorList>
    </citation>
    <scope>NUCLEOTIDE SEQUENCE [GENOMIC DNA]</scope>
    <source>
        <strain>C57BL/6J</strain>
    </source>
</reference>
<reference key="3">
    <citation type="journal article" date="2002" name="Genomics">
        <title>The human and mouse replication-dependent histone genes.</title>
        <authorList>
            <person name="Marzluff W.F."/>
            <person name="Gongidi P."/>
            <person name="Woods K.R."/>
            <person name="Jin J."/>
            <person name="Maltais L.J."/>
        </authorList>
    </citation>
    <scope>NUCLEOTIDE SEQUENCE [GENOMIC DNA] (H2BC7; H2BC11; H2BC13 AND H2BC15)</scope>
</reference>
<reference key="4">
    <citation type="journal article" date="2009" name="PLoS Biol.">
        <title>Lineage-specific biology revealed by a finished genome assembly of the mouse.</title>
        <authorList>
            <person name="Church D.M."/>
            <person name="Goodstadt L."/>
            <person name="Hillier L.W."/>
            <person name="Zody M.C."/>
            <person name="Goldstein S."/>
            <person name="She X."/>
            <person name="Bult C.J."/>
            <person name="Agarwala R."/>
            <person name="Cherry J.L."/>
            <person name="DiCuccio M."/>
            <person name="Hlavina W."/>
            <person name="Kapustin Y."/>
            <person name="Meric P."/>
            <person name="Maglott D."/>
            <person name="Birtle Z."/>
            <person name="Marques A.C."/>
            <person name="Graves T."/>
            <person name="Zhou S."/>
            <person name="Teague B."/>
            <person name="Potamousis K."/>
            <person name="Churas C."/>
            <person name="Place M."/>
            <person name="Herschleb J."/>
            <person name="Runnheim R."/>
            <person name="Forrest D."/>
            <person name="Amos-Landgraf J."/>
            <person name="Schwartz D.C."/>
            <person name="Cheng Z."/>
            <person name="Lindblad-Toh K."/>
            <person name="Eichler E.E."/>
            <person name="Ponting C.P."/>
        </authorList>
    </citation>
    <scope>NUCLEOTIDE SEQUENCE [LARGE SCALE GENOMIC DNA] (H2BC11; H2BC13 AND H2BC15)</scope>
    <source>
        <strain>C57BL/6J</strain>
    </source>
</reference>
<reference key="5">
    <citation type="journal article" date="2004" name="J. Exp. Med.">
        <title>Phosphorylation of histone H2B at DNA double-strand breaks.</title>
        <authorList>
            <person name="Fernandez-Capetillo O."/>
            <person name="Allis C.D."/>
            <person name="Nussenzweig A."/>
        </authorList>
    </citation>
    <scope>PHOSPHORYLATION AT SER-15</scope>
</reference>
<reference key="6">
    <citation type="journal article" date="2005" name="Immunity">
        <title>Histone modifications associated with somatic hypermutation.</title>
        <authorList>
            <person name="Odegard V.H."/>
            <person name="Kim S.T."/>
            <person name="Anderson S.M."/>
            <person name="Shlomchik M.J."/>
            <person name="Schatz D.G."/>
        </authorList>
    </citation>
    <scope>PHOSPHORYLATION AT SER-15</scope>
</reference>
<reference key="7">
    <citation type="journal article" date="2010" name="Science">
        <title>Signaling kinase AMPK activates stress-promoted transcription via histone H2B phosphorylation.</title>
        <authorList>
            <person name="Bungard D."/>
            <person name="Fuerth B.J."/>
            <person name="Zeng P.Y."/>
            <person name="Faubert B."/>
            <person name="Maas N.L."/>
            <person name="Viollet B."/>
            <person name="Carling D."/>
            <person name="Thompson C.B."/>
            <person name="Jones R.G."/>
            <person name="Berger S.L."/>
        </authorList>
    </citation>
    <scope>PHOSPHORYLATION AT SER-37</scope>
</reference>
<reference key="8">
    <citation type="journal article" date="2011" name="Cell">
        <title>Identification of 67 histone marks and histone lysine crotonylation as a new type of histone modification.</title>
        <authorList>
            <person name="Tan M."/>
            <person name="Luo H."/>
            <person name="Lee S."/>
            <person name="Jin F."/>
            <person name="Yang J.S."/>
            <person name="Montellier E."/>
            <person name="Buchou T."/>
            <person name="Cheng Z."/>
            <person name="Rousseaux S."/>
            <person name="Rajagopal N."/>
            <person name="Lu Z."/>
            <person name="Ye Z."/>
            <person name="Zhu Q."/>
            <person name="Wysocka J."/>
            <person name="Ye Y."/>
            <person name="Khochbin S."/>
            <person name="Ren B."/>
            <person name="Zhao Y."/>
        </authorList>
    </citation>
    <scope>CROTONYLATION AT LYS-6; LYS-12; LYS-13; LYS-16; LYS-17; LYS-21; LYS-24 AND LYS-35</scope>
</reference>
<reference key="9">
    <citation type="journal article" date="2012" name="Mol. Cell. Proteomics">
        <title>Lysine succinylation and lysine malonylation in histones.</title>
        <authorList>
            <person name="Xie Z."/>
            <person name="Dai J."/>
            <person name="Dai L."/>
            <person name="Tan M."/>
            <person name="Cheng Z."/>
            <person name="Wu Y."/>
            <person name="Boeke J.D."/>
            <person name="Zhao Y."/>
        </authorList>
    </citation>
    <scope>SUCCINYLATION AT LYS-121</scope>
</reference>
<reference key="10">
    <citation type="journal article" date="2014" name="Nat. Chem. Biol.">
        <title>Lysine 2-hydroxyisobutyrylation is a widely distributed active histone mark.</title>
        <authorList>
            <person name="Dai L."/>
            <person name="Peng C."/>
            <person name="Montellier E."/>
            <person name="Lu Z."/>
            <person name="Chen Y."/>
            <person name="Ishii H."/>
            <person name="Debernardi A."/>
            <person name="Buchou T."/>
            <person name="Rousseaux S."/>
            <person name="Jin F."/>
            <person name="Sabari B.R."/>
            <person name="Deng Z."/>
            <person name="Allis C.D."/>
            <person name="Ren B."/>
            <person name="Khochbin S."/>
            <person name="Zhao Y."/>
        </authorList>
    </citation>
    <scope>HYDROXYBUTYRYLATION AT LYS-6; LYS-13; LYS-21; LYS-24; LYS-25; LYS-35; LYS-44; LYS-47; LYS-58; LYS-86; LYS-109; LYS-117 AND LYS-121</scope>
</reference>
<reference key="11">
    <citation type="journal article" date="2016" name="Mol. Cell">
        <title>Metabolic regulation of gene expression by histone lysine beta-hydroxybutyrylation.</title>
        <authorList>
            <person name="Xie Z."/>
            <person name="Zhang D."/>
            <person name="Chung D."/>
            <person name="Tang Z."/>
            <person name="Huang H."/>
            <person name="Dai L."/>
            <person name="Qi S."/>
            <person name="Li J."/>
            <person name="Colak G."/>
            <person name="Chen Y."/>
            <person name="Xia C."/>
            <person name="Peng C."/>
            <person name="Ruan H."/>
            <person name="Kirkey M."/>
            <person name="Wang D."/>
            <person name="Jensen L.M."/>
            <person name="Kwon O.K."/>
            <person name="Lee S."/>
            <person name="Pletcher S.D."/>
            <person name="Tan M."/>
            <person name="Lombard D.B."/>
            <person name="White K.P."/>
            <person name="Zhao H."/>
            <person name="Li J."/>
            <person name="Roeder R.G."/>
            <person name="Yang X."/>
            <person name="Zhao Y."/>
        </authorList>
    </citation>
    <scope>HYDROXYBUTYRYLATION AT LYS-6; LYS-12; LYS-21; LYS-35; LYS-109 AND LYS-117</scope>
</reference>
<reference key="12">
    <citation type="journal article" date="2019" name="Nature">
        <title>Metabolic regulation of gene expression by histone lactylation.</title>
        <authorList>
            <person name="Zhang D."/>
            <person name="Tang Z."/>
            <person name="Huang H."/>
            <person name="Zhou G."/>
            <person name="Cui C."/>
            <person name="Weng Y."/>
            <person name="Liu W."/>
            <person name="Kim S."/>
            <person name="Lee S."/>
            <person name="Perez-Neut M."/>
            <person name="Ding J."/>
            <person name="Czyz D."/>
            <person name="Hu R."/>
            <person name="Ye Z."/>
            <person name="He M."/>
            <person name="Zheng Y.G."/>
            <person name="Shuman H.A."/>
            <person name="Dai L."/>
            <person name="Ren B."/>
            <person name="Roeder R.G."/>
            <person name="Becker L."/>
            <person name="Zhao Y."/>
        </authorList>
    </citation>
    <scope>LACTYLATION AT LYS-6; LYS-12; LYS-16; LYS-17; LYS-21; LYS-86; LYS-109 AND LYS-117</scope>
</reference>
<reference key="13">
    <citation type="journal article" date="2020" name="Mol. Cell">
        <title>Functional interplay between histone H2B ADP-ribosylation and phosphorylation controls adipogenesis.</title>
        <authorList>
            <person name="Huang D."/>
            <person name="Camacho C.V."/>
            <person name="Setlem R."/>
            <person name="Ryu K.W."/>
            <person name="Parameswaran B."/>
            <person name="Gupta R.K."/>
            <person name="Kraus W.L."/>
        </authorList>
    </citation>
    <scope>ADP-RIBOSYLATION AT GLU-36</scope>
    <scope>PHOSPHORYLATION AT SER-37</scope>
</reference>